<name>TBC31_XENLA</name>
<dbReference type="EMBL" id="BC077576">
    <property type="protein sequence ID" value="AAH77576.1"/>
    <property type="molecule type" value="mRNA"/>
</dbReference>
<dbReference type="RefSeq" id="NP_001086865.1">
    <property type="nucleotide sequence ID" value="NM_001093396.1"/>
</dbReference>
<dbReference type="SMR" id="Q6DDI6"/>
<dbReference type="DNASU" id="446700"/>
<dbReference type="GeneID" id="446700"/>
<dbReference type="KEGG" id="xla:446700"/>
<dbReference type="AGR" id="Xenbase:XB-GENE-969771"/>
<dbReference type="CTD" id="446700"/>
<dbReference type="Xenbase" id="XB-GENE-969771">
    <property type="gene designation" value="tbc1d31.L"/>
</dbReference>
<dbReference type="OrthoDB" id="5578278at2759"/>
<dbReference type="Proteomes" id="UP000186698">
    <property type="component" value="Chromosome 6L"/>
</dbReference>
<dbReference type="Bgee" id="446700">
    <property type="expression patterns" value="Expressed in egg cell and 19 other cell types or tissues"/>
</dbReference>
<dbReference type="GO" id="GO:0034451">
    <property type="term" value="C:centriolar satellite"/>
    <property type="evidence" value="ECO:0000250"/>
    <property type="project" value="UniProtKB"/>
</dbReference>
<dbReference type="GO" id="GO:0005813">
    <property type="term" value="C:centrosome"/>
    <property type="evidence" value="ECO:0000250"/>
    <property type="project" value="UniProtKB"/>
</dbReference>
<dbReference type="GO" id="GO:0036064">
    <property type="term" value="C:ciliary basal body"/>
    <property type="evidence" value="ECO:0000250"/>
    <property type="project" value="UniProtKB"/>
</dbReference>
<dbReference type="GO" id="GO:0005737">
    <property type="term" value="C:cytoplasm"/>
    <property type="evidence" value="ECO:0007669"/>
    <property type="project" value="UniProtKB-KW"/>
</dbReference>
<dbReference type="GO" id="GO:0060090">
    <property type="term" value="F:molecular adaptor activity"/>
    <property type="evidence" value="ECO:0000250"/>
    <property type="project" value="UniProtKB"/>
</dbReference>
<dbReference type="GO" id="GO:0060271">
    <property type="term" value="P:cilium assembly"/>
    <property type="evidence" value="ECO:0000250"/>
    <property type="project" value="UniProtKB"/>
</dbReference>
<dbReference type="FunFam" id="2.130.10.10:FF:000185">
    <property type="entry name" value="TBC1 domain family member 31 isoform X1"/>
    <property type="match status" value="1"/>
</dbReference>
<dbReference type="FunFam" id="1.10.472.80:FF:000022">
    <property type="entry name" value="TBC1 domain family, member 31"/>
    <property type="match status" value="1"/>
</dbReference>
<dbReference type="Gene3D" id="1.10.472.80">
    <property type="entry name" value="Ypt/Rab-GAP domain of gyp1p, domain 3"/>
    <property type="match status" value="1"/>
</dbReference>
<dbReference type="Gene3D" id="2.130.10.10">
    <property type="entry name" value="YVTN repeat-like/Quinoprotein amine dehydrogenase"/>
    <property type="match status" value="2"/>
</dbReference>
<dbReference type="InterPro" id="IPR000195">
    <property type="entry name" value="Rab-GAP-TBC_dom"/>
</dbReference>
<dbReference type="InterPro" id="IPR035969">
    <property type="entry name" value="Rab-GAP_TBC_sf"/>
</dbReference>
<dbReference type="InterPro" id="IPR051570">
    <property type="entry name" value="TBC1_cilium_biogenesis"/>
</dbReference>
<dbReference type="InterPro" id="IPR015943">
    <property type="entry name" value="WD40/YVTN_repeat-like_dom_sf"/>
</dbReference>
<dbReference type="InterPro" id="IPR036322">
    <property type="entry name" value="WD40_repeat_dom_sf"/>
</dbReference>
<dbReference type="InterPro" id="IPR001680">
    <property type="entry name" value="WD40_rpt"/>
</dbReference>
<dbReference type="PANTHER" id="PTHR19853:SF1">
    <property type="entry name" value="TBC1 DOMAIN FAMILY MEMBER 31"/>
    <property type="match status" value="1"/>
</dbReference>
<dbReference type="PANTHER" id="PTHR19853">
    <property type="entry name" value="WD REPEAT CONTAINING PROTEIN 3 WDR3"/>
    <property type="match status" value="1"/>
</dbReference>
<dbReference type="Pfam" id="PF00566">
    <property type="entry name" value="RabGAP-TBC"/>
    <property type="match status" value="1"/>
</dbReference>
<dbReference type="Pfam" id="PF00400">
    <property type="entry name" value="WD40"/>
    <property type="match status" value="1"/>
</dbReference>
<dbReference type="SMART" id="SM00320">
    <property type="entry name" value="WD40"/>
    <property type="match status" value="6"/>
</dbReference>
<dbReference type="SUPFAM" id="SSF50978">
    <property type="entry name" value="WD40 repeat-like"/>
    <property type="match status" value="1"/>
</dbReference>
<dbReference type="SUPFAM" id="SSF47923">
    <property type="entry name" value="Ypt/Rab-GAP domain of gyp1p"/>
    <property type="match status" value="1"/>
</dbReference>
<dbReference type="PROSITE" id="PS50086">
    <property type="entry name" value="TBC_RABGAP"/>
    <property type="match status" value="1"/>
</dbReference>
<dbReference type="PROSITE" id="PS00678">
    <property type="entry name" value="WD_REPEATS_1"/>
    <property type="match status" value="1"/>
</dbReference>
<dbReference type="PROSITE" id="PS50082">
    <property type="entry name" value="WD_REPEATS_2"/>
    <property type="match status" value="1"/>
</dbReference>
<dbReference type="PROSITE" id="PS50294">
    <property type="entry name" value="WD_REPEATS_REGION"/>
    <property type="match status" value="1"/>
</dbReference>
<proteinExistence type="evidence at transcript level"/>
<feature type="chain" id="PRO_0000051423" description="TBC1 domain family member 31">
    <location>
        <begin position="1"/>
        <end position="1089"/>
    </location>
</feature>
<feature type="repeat" description="WD 1">
    <location>
        <begin position="33"/>
        <end position="74"/>
    </location>
</feature>
<feature type="repeat" description="WD 2">
    <location>
        <begin position="75"/>
        <end position="116"/>
    </location>
</feature>
<feature type="repeat" description="WD 3">
    <location>
        <begin position="117"/>
        <end position="157"/>
    </location>
</feature>
<feature type="repeat" description="WD 4">
    <location>
        <begin position="158"/>
        <end position="200"/>
    </location>
</feature>
<feature type="repeat" description="WD 5">
    <location>
        <begin position="201"/>
        <end position="248"/>
    </location>
</feature>
<feature type="repeat" description="WD 6">
    <location>
        <begin position="249"/>
        <end position="296"/>
    </location>
</feature>
<feature type="repeat" description="WD 7">
    <location>
        <begin position="297"/>
        <end position="334"/>
    </location>
</feature>
<feature type="domain" description="Rab-GAP TBC" evidence="3">
    <location>
        <begin position="432"/>
        <end position="607"/>
    </location>
</feature>
<feature type="region of interest" description="Disordered" evidence="4">
    <location>
        <begin position="355"/>
        <end position="383"/>
    </location>
</feature>
<feature type="coiled-coil region" evidence="2">
    <location>
        <begin position="698"/>
        <end position="852"/>
    </location>
</feature>
<feature type="coiled-coil region" evidence="2">
    <location>
        <begin position="892"/>
        <end position="951"/>
    </location>
</feature>
<feature type="coiled-coil region" evidence="2">
    <location>
        <begin position="1050"/>
        <end position="1077"/>
    </location>
</feature>
<protein>
    <recommendedName>
        <fullName evidence="5">TBC1 domain family member 31</fullName>
    </recommendedName>
</protein>
<organism>
    <name type="scientific">Xenopus laevis</name>
    <name type="common">African clawed frog</name>
    <dbReference type="NCBI Taxonomy" id="8355"/>
    <lineage>
        <taxon>Eukaryota</taxon>
        <taxon>Metazoa</taxon>
        <taxon>Chordata</taxon>
        <taxon>Craniata</taxon>
        <taxon>Vertebrata</taxon>
        <taxon>Euteleostomi</taxon>
        <taxon>Amphibia</taxon>
        <taxon>Batrachia</taxon>
        <taxon>Anura</taxon>
        <taxon>Pipoidea</taxon>
        <taxon>Pipidae</taxon>
        <taxon>Xenopodinae</taxon>
        <taxon>Xenopus</taxon>
        <taxon>Xenopus</taxon>
    </lineage>
</organism>
<comment type="function">
    <text evidence="1">Molecular adapter which is involved in cilium biogenesis. Part of a functional complex including OFD1 a centriolar protein involved in cilium assembly. Could regulate the cAMP-dependent phosphorylation of OFD1, and its subsequent ubiquitination by PJA2 which ultimately leads to its proteasomal degradation.</text>
</comment>
<comment type="subcellular location">
    <subcellularLocation>
        <location evidence="1">Cytoplasm</location>
        <location evidence="1">Cytoskeleton</location>
        <location evidence="1">Microtubule organizing center</location>
        <location evidence="1">Centrosome</location>
    </subcellularLocation>
    <subcellularLocation>
        <location evidence="1">Cytoplasm</location>
        <location evidence="1">Cytoskeleton</location>
        <location evidence="1">Microtubule organizing center</location>
        <location evidence="1">Centrosome</location>
        <location evidence="1">Centriolar satellite</location>
    </subcellularLocation>
    <subcellularLocation>
        <location evidence="1">Cytoplasm</location>
        <location evidence="1">Cytoskeleton</location>
        <location evidence="1">Cilium basal body</location>
    </subcellularLocation>
</comment>
<accession>Q6DDI6</accession>
<reference key="1">
    <citation type="submission" date="2004-07" db="EMBL/GenBank/DDBJ databases">
        <authorList>
            <consortium name="NIH - Xenopus Gene Collection (XGC) project"/>
        </authorList>
    </citation>
    <scope>NUCLEOTIDE SEQUENCE [LARGE SCALE MRNA]</scope>
    <source>
        <tissue>Oocyte</tissue>
    </source>
</reference>
<sequence>MQTTDLGNKEYGKIWHRKPSPSTNEGIIVNIVHVDASHLSKSTRFLQAAFDSAGDCFLAGDHLGNVYMFNLNRNRFDLVQKTMQACTAIAFNLHRKTEFLVALADNSVKCFDAGAKELVSWMRGHESAVTSISIHASGRYAVTTSSDTAQLWDLDTFQRKRKLNVRQSVGIQKVFFLPLSNTILSCFKDDSIFAWESDTLACKYQLPIPEDETKLHYKAFAITRDGRMLAAGGKSKNLHLWCLDSKQLFRIIQMPAKVRSVQQLEFLPDNFDGGSSQILGVLSQDGIMRFINIQTCKLVFDIGNPDNRVVTSSVSPNGRYITSVMENGSLNIYSVQALSKELNKPPPPLVKMVDLSKDKDSTGNKSGVSRASQEKVRVSSGRTCRPWKTKDPIVRTKYLRPEDTTASEDKENALPAGLNKPRLQAMLKGFGEYPAKYRMFIWRSLLQLPENHAAFSSLLDKGTHSQYKLLHQEYPIKSRKLLRVLQRTLSALAHWSAIFGETKYLPLLAFPFVKLFQNNQLICFEVVATVITNWCQHWFEYFPNPPINILGMVENLLAHHDKELLQHFINHGVNSQVYAWPILETLFSEVLTREEWLRLFDNVFSNHPSFLLMAVVSYIISSRSPLLHCNQKDDFEYFFHHRNNLDISNMIREAYHLMDTSPAEIHPQRLLSDFEPLTRGQYPIFNKYPKFIVDYQGQERERIRQEEMEYLRERQLTQEVEAEAVKRRLEDQAWYQQQELLKGAEEQRRKLLMDEEQKLLHQRQRLATVKRELRLKELQLLDAARRRFLRYQQDQRKMELRRLDDEIERKVSLREQETATIVKDVEIRQMELEAQRRFFEQQLAKEQEAVTQDMKGELDANRRRADLEEQMFWRLMETEEDLKDQKLLEESLAKAERLCVETDWKIQSLQKQKCDDWERGKRYEEISKLTEDVQEKERELCNVLKDMETRKWAEVSQKMTELEREKLAGSAQQAQRQQFLQEKLRQEAGPIDISGEDGNEYFERLRDLNRSSMQKDFSSSDEQHVPENVCLNDVSASDSSTHFSLDRGRGELERGERALISEVRELRQKLASQAHKKYPHLHFSQTSWS</sequence>
<evidence type="ECO:0000250" key="1">
    <source>
        <dbReference type="UniProtKB" id="Q96DN5"/>
    </source>
</evidence>
<evidence type="ECO:0000255" key="2"/>
<evidence type="ECO:0000255" key="3">
    <source>
        <dbReference type="PROSITE-ProRule" id="PRU00163"/>
    </source>
</evidence>
<evidence type="ECO:0000256" key="4">
    <source>
        <dbReference type="SAM" id="MobiDB-lite"/>
    </source>
</evidence>
<evidence type="ECO:0000305" key="5"/>
<keyword id="KW-0966">Cell projection</keyword>
<keyword id="KW-0970">Cilium biogenesis/degradation</keyword>
<keyword id="KW-0175">Coiled coil</keyword>
<keyword id="KW-0963">Cytoplasm</keyword>
<keyword id="KW-0206">Cytoskeleton</keyword>
<keyword id="KW-1185">Reference proteome</keyword>
<keyword id="KW-0677">Repeat</keyword>
<keyword id="KW-0853">WD repeat</keyword>
<gene>
    <name evidence="1" type="primary">tbc1d31</name>
</gene>